<proteinExistence type="inferred from homology"/>
<evidence type="ECO:0000250" key="1">
    <source>
        <dbReference type="UniProtKB" id="A0A0H3AMJ9"/>
    </source>
</evidence>
<evidence type="ECO:0000250" key="2">
    <source>
        <dbReference type="UniProtKB" id="P0AE67"/>
    </source>
</evidence>
<evidence type="ECO:0000250" key="3">
    <source>
        <dbReference type="UniProtKB" id="Q56312"/>
    </source>
</evidence>
<evidence type="ECO:0000255" key="4">
    <source>
        <dbReference type="PROSITE-ProRule" id="PRU00169"/>
    </source>
</evidence>
<evidence type="ECO:0000305" key="5"/>
<dbReference type="EMBL" id="AL596166">
    <property type="protein sequence ID" value="CAC95931.1"/>
    <property type="molecule type" value="Genomic_DNA"/>
</dbReference>
<dbReference type="PIR" id="AC1520">
    <property type="entry name" value="AC1520"/>
</dbReference>
<dbReference type="RefSeq" id="WP_003721812.1">
    <property type="nucleotide sequence ID" value="NC_003212.1"/>
</dbReference>
<dbReference type="SMR" id="P0A4H6"/>
<dbReference type="STRING" id="272626.gene:17565026"/>
<dbReference type="KEGG" id="lin:cheY"/>
<dbReference type="eggNOG" id="COG2201">
    <property type="taxonomic scope" value="Bacteria"/>
</dbReference>
<dbReference type="HOGENOM" id="CLU_000445_69_15_9"/>
<dbReference type="OrthoDB" id="9790669at2"/>
<dbReference type="Proteomes" id="UP000002513">
    <property type="component" value="Chromosome"/>
</dbReference>
<dbReference type="GO" id="GO:0005737">
    <property type="term" value="C:cytoplasm"/>
    <property type="evidence" value="ECO:0007669"/>
    <property type="project" value="UniProtKB-SubCell"/>
</dbReference>
<dbReference type="GO" id="GO:0046872">
    <property type="term" value="F:metal ion binding"/>
    <property type="evidence" value="ECO:0007669"/>
    <property type="project" value="UniProtKB-KW"/>
</dbReference>
<dbReference type="GO" id="GO:0097588">
    <property type="term" value="P:archaeal or bacterial-type flagellum-dependent cell motility"/>
    <property type="evidence" value="ECO:0007669"/>
    <property type="project" value="UniProtKB-KW"/>
</dbReference>
<dbReference type="GO" id="GO:0006935">
    <property type="term" value="P:chemotaxis"/>
    <property type="evidence" value="ECO:0007669"/>
    <property type="project" value="UniProtKB-KW"/>
</dbReference>
<dbReference type="GO" id="GO:0000160">
    <property type="term" value="P:phosphorelay signal transduction system"/>
    <property type="evidence" value="ECO:0007669"/>
    <property type="project" value="UniProtKB-KW"/>
</dbReference>
<dbReference type="CDD" id="cd17542">
    <property type="entry name" value="REC_CheY"/>
    <property type="match status" value="1"/>
</dbReference>
<dbReference type="Gene3D" id="3.40.50.2300">
    <property type="match status" value="1"/>
</dbReference>
<dbReference type="InterPro" id="IPR011006">
    <property type="entry name" value="CheY-like_superfamily"/>
</dbReference>
<dbReference type="InterPro" id="IPR001789">
    <property type="entry name" value="Sig_transdc_resp-reg_receiver"/>
</dbReference>
<dbReference type="InterPro" id="IPR052048">
    <property type="entry name" value="ST_Response_Regulator"/>
</dbReference>
<dbReference type="PANTHER" id="PTHR43228">
    <property type="entry name" value="TWO-COMPONENT RESPONSE REGULATOR"/>
    <property type="match status" value="1"/>
</dbReference>
<dbReference type="PANTHER" id="PTHR43228:SF1">
    <property type="entry name" value="TWO-COMPONENT RESPONSE REGULATOR ARR22"/>
    <property type="match status" value="1"/>
</dbReference>
<dbReference type="Pfam" id="PF00072">
    <property type="entry name" value="Response_reg"/>
    <property type="match status" value="1"/>
</dbReference>
<dbReference type="SMART" id="SM00448">
    <property type="entry name" value="REC"/>
    <property type="match status" value="1"/>
</dbReference>
<dbReference type="SUPFAM" id="SSF52172">
    <property type="entry name" value="CheY-like"/>
    <property type="match status" value="1"/>
</dbReference>
<dbReference type="PROSITE" id="PS50110">
    <property type="entry name" value="RESPONSE_REGULATORY"/>
    <property type="match status" value="1"/>
</dbReference>
<gene>
    <name type="primary">cheY</name>
    <name type="ordered locus">lin0699</name>
</gene>
<feature type="chain" id="PRO_0000081052" description="Chemotaxis protein CheY">
    <location>
        <begin position="1"/>
        <end position="119"/>
    </location>
</feature>
<feature type="domain" description="Response regulatory" evidence="4">
    <location>
        <begin position="3"/>
        <end position="118"/>
    </location>
</feature>
<feature type="binding site" evidence="1">
    <location>
        <position position="8"/>
    </location>
    <ligand>
        <name>Mg(2+)</name>
        <dbReference type="ChEBI" id="CHEBI:18420"/>
    </ligand>
</feature>
<feature type="binding site" evidence="2">
    <location>
        <position position="9"/>
    </location>
    <ligand>
        <name>Mg(2+)</name>
        <dbReference type="ChEBI" id="CHEBI:18420"/>
    </ligand>
</feature>
<feature type="binding site" evidence="2">
    <location>
        <position position="53"/>
    </location>
    <ligand>
        <name>Mg(2+)</name>
        <dbReference type="ChEBI" id="CHEBI:18420"/>
    </ligand>
</feature>
<feature type="binding site" evidence="3">
    <location>
        <position position="55"/>
    </location>
    <ligand>
        <name>Mg(2+)</name>
        <dbReference type="ChEBI" id="CHEBI:18420"/>
    </ligand>
</feature>
<feature type="modified residue" description="4-aspartylphosphate" evidence="4">
    <location>
        <position position="53"/>
    </location>
</feature>
<reference key="1">
    <citation type="journal article" date="2001" name="Science">
        <title>Comparative genomics of Listeria species.</title>
        <authorList>
            <person name="Glaser P."/>
            <person name="Frangeul L."/>
            <person name="Buchrieser C."/>
            <person name="Rusniok C."/>
            <person name="Amend A."/>
            <person name="Baquero F."/>
            <person name="Berche P."/>
            <person name="Bloecker H."/>
            <person name="Brandt P."/>
            <person name="Chakraborty T."/>
            <person name="Charbit A."/>
            <person name="Chetouani F."/>
            <person name="Couve E."/>
            <person name="de Daruvar A."/>
            <person name="Dehoux P."/>
            <person name="Domann E."/>
            <person name="Dominguez-Bernal G."/>
            <person name="Duchaud E."/>
            <person name="Durant L."/>
            <person name="Dussurget O."/>
            <person name="Entian K.-D."/>
            <person name="Fsihi H."/>
            <person name="Garcia-del Portillo F."/>
            <person name="Garrido P."/>
            <person name="Gautier L."/>
            <person name="Goebel W."/>
            <person name="Gomez-Lopez N."/>
            <person name="Hain T."/>
            <person name="Hauf J."/>
            <person name="Jackson D."/>
            <person name="Jones L.-M."/>
            <person name="Kaerst U."/>
            <person name="Kreft J."/>
            <person name="Kuhn M."/>
            <person name="Kunst F."/>
            <person name="Kurapkat G."/>
            <person name="Madueno E."/>
            <person name="Maitournam A."/>
            <person name="Mata Vicente J."/>
            <person name="Ng E."/>
            <person name="Nedjari H."/>
            <person name="Nordsiek G."/>
            <person name="Novella S."/>
            <person name="de Pablos B."/>
            <person name="Perez-Diaz J.-C."/>
            <person name="Purcell R."/>
            <person name="Remmel B."/>
            <person name="Rose M."/>
            <person name="Schlueter T."/>
            <person name="Simoes N."/>
            <person name="Tierrez A."/>
            <person name="Vazquez-Boland J.-A."/>
            <person name="Voss H."/>
            <person name="Wehland J."/>
            <person name="Cossart P."/>
        </authorList>
    </citation>
    <scope>NUCLEOTIDE SEQUENCE [LARGE SCALE GENOMIC DNA]</scope>
    <source>
        <strain>ATCC BAA-680 / CLIP 11262</strain>
    </source>
</reference>
<keyword id="KW-0145">Chemotaxis</keyword>
<keyword id="KW-0963">Cytoplasm</keyword>
<keyword id="KW-0283">Flagellar rotation</keyword>
<keyword id="KW-0460">Magnesium</keyword>
<keyword id="KW-0479">Metal-binding</keyword>
<keyword id="KW-0597">Phosphoprotein</keyword>
<keyword id="KW-0902">Two-component regulatory system</keyword>
<accession>P0A4H6</accession>
<accession>Q48767</accession>
<sequence>MLKLLIVDDAMFMRTMIKNIVKDSDFEVVAEAENGLEAVKKYDEVKPDIVTLDITMPEMDGLEALAQIMAKDPSAKVIMCSAMGQQGMVVDAIKKGAKDFIVKPFQADRVLEALEKAAK</sequence>
<protein>
    <recommendedName>
        <fullName>Chemotaxis protein CheY</fullName>
    </recommendedName>
</protein>
<name>CHEY_LISIN</name>
<organism>
    <name type="scientific">Listeria innocua serovar 6a (strain ATCC BAA-680 / CLIP 11262)</name>
    <dbReference type="NCBI Taxonomy" id="272626"/>
    <lineage>
        <taxon>Bacteria</taxon>
        <taxon>Bacillati</taxon>
        <taxon>Bacillota</taxon>
        <taxon>Bacilli</taxon>
        <taxon>Bacillales</taxon>
        <taxon>Listeriaceae</taxon>
        <taxon>Listeria</taxon>
    </lineage>
</organism>
<comment type="function">
    <text evidence="2">Involved in the transmission of sensory signals from the chemoreceptors to the flagellar motors. CheY seems to regulate the clockwise (CW) rotation (By similarity).</text>
</comment>
<comment type="cofactor">
    <cofactor evidence="2">
        <name>Mg(2+)</name>
        <dbReference type="ChEBI" id="CHEBI:18420"/>
    </cofactor>
    <text evidence="2">Binds 1 Mg(2+) ion per subunit.</text>
</comment>
<comment type="subcellular location">
    <subcellularLocation>
        <location evidence="5">Cytoplasm</location>
    </subcellularLocation>
</comment>
<comment type="PTM">
    <text evidence="2">Phosphorylated by CheA.</text>
</comment>